<protein>
    <recommendedName>
        <fullName>Beta-galactosidase BgaB</fullName>
        <shortName>Beta-gal</shortName>
        <ecNumber>3.2.1.23</ecNumber>
    </recommendedName>
    <alternativeName>
        <fullName>Beta-Gal II</fullName>
    </alternativeName>
</protein>
<sequence>MSARRNFEWPELLTADGRGIAFGGDYNPDQWSEDIWDDDIRLMKQAGVNTVALAIFSWDRIQPTEDRWDFGWLDRIIDKLGNAGIVVDLASATATAPLWLYESHPEVLPRDKYGHPVNAGSRQSWSPTSPVFKEYALTLCRKLAERYGTNPYVTAWHMGNEYGWNNREDYSDNALEAFRAWCRRKYGTIDALNQAWGTTFWGQEMNGFDEVLIPRFMGADSMVNPGQKLDFERFGNDMLLDFYKAERDAIAEICPDKPFTTNFMVSTDQCCMDYAAWAKEVNFVSNDHYFHEGESHLDELACSDALMDSLALGKPWYVMEHSTSAVQWKPLNTRKRKGETVRDSLAHVAMGADAINFFQWRASAFGAEAFHSAMVPHAGEDTKLFRQVCELGASLHTLADAGVQGTELAHSDTAILFSAESEWATRSQTLPSMKLNHWHDVRDWYRAFLDAGSRADIVPLAYDWSSYKTVVLPTVLILSAADTQRLADFAAAGGRVVVGYATGLIDEHFHTWLGGYPGAGDGLLRSMLGVRGEEFNILGAEAEGEPGEIRLSSADDSAALDGTTTRLWQNDVNVTGEHAQVLATYAGEEADEWELDGTAAVTRNPYGSGEAYFVGCDLDVADLTKLVRAYLAASSQENADVLHTVRASADATFDFYLPRGKKTVELQGIEGEPVILFQTDREEKPGSYTVRRNGVLVVRR</sequence>
<gene>
    <name type="primary">bgaB</name>
    <name type="synonym">bgaLII</name>
    <name type="ordered locus">BAD_1401</name>
</gene>
<keyword id="KW-0002">3D-structure</keyword>
<keyword id="KW-0903">Direct protein sequencing</keyword>
<keyword id="KW-0326">Glycosidase</keyword>
<keyword id="KW-0378">Hydrolase</keyword>
<keyword id="KW-1185">Reference proteome</keyword>
<evidence type="ECO:0000250" key="1"/>
<evidence type="ECO:0000269" key="2">
    <source>
    </source>
</evidence>
<evidence type="ECO:0000269" key="3">
    <source>
    </source>
</evidence>
<evidence type="ECO:0000305" key="4"/>
<evidence type="ECO:0007829" key="5">
    <source>
        <dbReference type="PDB" id="5VYM"/>
    </source>
</evidence>
<organism>
    <name type="scientific">Bifidobacterium adolescentis (strain ATCC 15703 / DSM 20083 / NCTC 11814 / E194a)</name>
    <dbReference type="NCBI Taxonomy" id="367928"/>
    <lineage>
        <taxon>Bacteria</taxon>
        <taxon>Bacillati</taxon>
        <taxon>Actinomycetota</taxon>
        <taxon>Actinomycetes</taxon>
        <taxon>Bifidobacteriales</taxon>
        <taxon>Bifidobacteriaceae</taxon>
        <taxon>Bifidobacterium</taxon>
    </lineage>
</organism>
<feature type="initiator methionine" description="Removed" evidence="3">
    <location>
        <position position="1"/>
    </location>
</feature>
<feature type="chain" id="PRO_0000407683" description="Beta-galactosidase BgaB">
    <location>
        <begin position="2"/>
        <end position="700"/>
    </location>
</feature>
<feature type="active site" description="Proton donor" evidence="1">
    <location>
        <position position="161"/>
    </location>
</feature>
<feature type="active site" description="Nucleophile" evidence="1">
    <location>
        <position position="320"/>
    </location>
</feature>
<feature type="binding site" evidence="1">
    <location>
        <position position="122"/>
    </location>
    <ligand>
        <name>substrate</name>
    </ligand>
</feature>
<feature type="binding site" evidence="1">
    <location>
        <position position="160"/>
    </location>
    <ligand>
        <name>substrate</name>
    </ligand>
</feature>
<feature type="binding site" evidence="1">
    <location>
        <position position="328"/>
    </location>
    <ligand>
        <name>substrate</name>
    </ligand>
</feature>
<feature type="binding site" evidence="1">
    <location>
        <begin position="368"/>
        <end position="371"/>
    </location>
    <ligand>
        <name>substrate</name>
    </ligand>
</feature>
<feature type="sequence conflict" description="In Ref. 1; AAR24113." evidence="4" ref="1">
    <original>IPRFMGADSMVNPGQKLD</original>
    <variation>HPTVHGRRLRWSTPARSST</variation>
    <location>
        <begin position="213"/>
        <end position="230"/>
    </location>
</feature>
<feature type="sequence conflict" description="In Ref. 1; AAR24113." evidence="4" ref="1">
    <original>N</original>
    <variation>T</variation>
    <location>
        <position position="536"/>
    </location>
</feature>
<feature type="strand" evidence="5">
    <location>
        <begin position="412"/>
        <end position="417"/>
    </location>
</feature>
<feature type="helix" evidence="5">
    <location>
        <begin position="419"/>
        <end position="425"/>
    </location>
</feature>
<feature type="helix" evidence="5">
    <location>
        <begin position="437"/>
        <end position="450"/>
    </location>
</feature>
<feature type="strand" evidence="5">
    <location>
        <begin position="456"/>
        <end position="459"/>
    </location>
</feature>
<feature type="strand" evidence="5">
    <location>
        <begin position="468"/>
        <end position="474"/>
    </location>
</feature>
<feature type="helix" evidence="5">
    <location>
        <begin position="480"/>
        <end position="491"/>
    </location>
</feature>
<feature type="strand" evidence="5">
    <location>
        <begin position="495"/>
        <end position="499"/>
    </location>
</feature>
<feature type="strand" evidence="5">
    <location>
        <begin position="502"/>
        <end position="505"/>
    </location>
</feature>
<feature type="strand" evidence="5">
    <location>
        <begin position="514"/>
        <end position="517"/>
    </location>
</feature>
<feature type="helix" evidence="5">
    <location>
        <begin position="519"/>
        <end position="522"/>
    </location>
</feature>
<feature type="helix" evidence="5">
    <location>
        <begin position="523"/>
        <end position="528"/>
    </location>
</feature>
<feature type="strand" evidence="5">
    <location>
        <begin position="530"/>
        <end position="534"/>
    </location>
</feature>
<feature type="strand" evidence="5">
    <location>
        <begin position="549"/>
        <end position="556"/>
    </location>
</feature>
<feature type="strand" evidence="5">
    <location>
        <begin position="564"/>
        <end position="569"/>
    </location>
</feature>
<feature type="strand" evidence="5">
    <location>
        <begin position="580"/>
        <end position="587"/>
    </location>
</feature>
<feature type="helix" evidence="5">
    <location>
        <begin position="588"/>
        <end position="592"/>
    </location>
</feature>
<feature type="strand" evidence="5">
    <location>
        <begin position="599"/>
        <end position="606"/>
    </location>
</feature>
<feature type="strand" evidence="5">
    <location>
        <begin position="609"/>
        <end position="614"/>
    </location>
</feature>
<feature type="helix" evidence="5">
    <location>
        <begin position="620"/>
        <end position="630"/>
    </location>
</feature>
<accession>A1A399</accession>
<accession>Q5J883</accession>
<proteinExistence type="evidence at protein level"/>
<name>BGAL_BIFAA</name>
<comment type="function">
    <text evidence="2 3">Involved in the hydrolysis of transgalactooligosaccharides (TOS). Highly active towards Gal(beta1-4)Gal and Gal(beta1-4)-Gal-containing oligosaccharides. Low activity towards Gal(beta1-3)Gal, lactose and Gal(beta1-3)GalOMe. No activity towards Gal(beta1-6)Gal, Gal(beta1-4)Man, Gal(alpha1-4)Gal, Gal(alpha1-3)Gal(beta1-4)Gal, lactulose, 3'fucosyllactose, lacto-N-fucopentaose I, lacto-N-fucopentaose II, cellobiose, maltose or sucrose. No transglycosylation activity is found at high substrate concentrations (100 mg/ml) and only low transglycosylation activity at lower substrate concentrations (10 mg/ml).</text>
</comment>
<comment type="catalytic activity">
    <reaction evidence="2 3">
        <text>Hydrolysis of terminal non-reducing beta-D-galactose residues in beta-D-galactosides.</text>
        <dbReference type="EC" id="3.2.1.23"/>
    </reaction>
</comment>
<comment type="activity regulation">
    <text evidence="2 3">Inhibited by high substrate concentrations (100 mg/ml). No effect on activity with various EDTA concentrations (0-1 mM). 20-fold higher activity when cells grown on TOS than when cells grown on galactose, glucose and lactose.</text>
</comment>
<comment type="biophysicochemical properties">
    <kinetics>
        <KM evidence="2 3">60 mM for Gal(beta1-4)Gal (at 37 degrees Celsius and pH 6.0)</KM>
        <KM evidence="2 3">2.2 mM for p-nitrophenyl-beta-D-galactopyranoside (PNPG) (at 40 degrees Celsius and pH 6.0)</KM>
        <KM evidence="2 3">2.2 mM for beta-D-Galp-(1-&gt;4)-beta-D-Galp-(1-&gt;4)-D-Glcp (at 40 degrees Celsius and pH 6.0)</KM>
        <KM evidence="2 3">4 mM for beta-D-Galp-(1-&gt;4)-beta-D-Galp-(1-&gt;4)-beta-D-Galp-(1-&gt;4)-D-Glcp (at 40 degrees Celsius and pH 6.0)</KM>
        <KM evidence="2 3">3.7 mM for beta-D-Galp-(1-&gt;4)-D-Galp (at 40 degrees Celsius and pH 6.0)</KM>
        <KM evidence="2 3">6.4 mM for beta-D-Galp-(1-&gt;4)-beta-D-Galp-(1-&gt;4)-D-Galp (at 40 degrees Celsius and pH 6.0)</KM>
        <KM evidence="2 3">5.2 mM for beta-D-Galp-(1-&gt;4)-beta-D-Galp-(1-&gt;4)-beta-D-Galp-(1-&gt;4)-D-Galp (at 40 degrees Celsius and pH 6.0)</KM>
        <Vmax evidence="2 3">1.129 umol/min/mg enzyme with Gal(beta1-4)Gal as substrate (at 37 degrees Celsius and pH 6.0)</Vmax>
    </kinetics>
    <phDependence>
        <text evidence="2 3">Optimum is pH 6.0 using PNPG or TOS as substrate. Not active below pH 5.</text>
    </phDependence>
    <temperatureDependence>
        <text evidence="2 3">Optimum temperature is 50 degrees Celsius using PNPG as substrate (PubMed:15480628). Optimum temperature is 35 degrees Celsius using TOS as substrate (PubMed:10742215). Stable at 40 degrees Celsius. Half-life time at 50 degrees Celsius is 10 minutes.</text>
    </temperatureDependence>
</comment>
<comment type="subunit">
    <text evidence="2 3">Trimer (PubMed:15480628). Tetramer (PubMed:10742215).</text>
</comment>
<comment type="PTM">
    <text>The N-terminus is blocked.</text>
</comment>
<comment type="similarity">
    <text evidence="4">Belongs to the glycosyl hydrolase 42 family.</text>
</comment>
<comment type="sequence caution" evidence="4">
    <conflict type="erroneous initiation">
        <sequence resource="EMBL-CDS" id="BAF40182"/>
    </conflict>
    <text>Extended N-terminus.</text>
</comment>
<reference key="1">
    <citation type="journal article" date="2004" name="Appl. Microbiol. Biotechnol.">
        <title>beta-galactosidase from Bifidobacterium adolescentis DSM20083 prefers beta(1,4)-galactosides over lactose.</title>
        <authorList>
            <person name="Hinz S.W."/>
            <person name="van den Brock L.A."/>
            <person name="Beldman G."/>
            <person name="Vincken J.P."/>
            <person name="Voragen A.G."/>
        </authorList>
    </citation>
    <scope>NUCLEOTIDE SEQUENCE [GENOMIC DNA]</scope>
    <scope>PROTEIN SEQUENCE OF 2-16; 20-29; 455-463 AND 535-546</scope>
    <scope>FUNCTION</scope>
    <scope>CATALYTIC ACTIVITY</scope>
    <scope>BIOPHYSICOCHEMICAL PROPERTIES</scope>
    <scope>ACTIVITY REGULATION</scope>
    <scope>SUBSTRATE SPECIFICITY</scope>
    <source>
        <strain>ATCC 15703 / DSM 20083 / NCTC 11814 / E194a</strain>
    </source>
</reference>
<reference key="2">
    <citation type="submission" date="2006-12" db="EMBL/GenBank/DDBJ databases">
        <title>Bifidobacterium adolescentis complete genome sequence.</title>
        <authorList>
            <person name="Suzuki T."/>
            <person name="Tsuda Y."/>
            <person name="Kanou N."/>
            <person name="Inoue T."/>
            <person name="Kumazaki K."/>
            <person name="Nagano S."/>
            <person name="Hirai S."/>
            <person name="Tanaka K."/>
            <person name="Watanabe K."/>
        </authorList>
    </citation>
    <scope>NUCLEOTIDE SEQUENCE [LARGE SCALE GENOMIC DNA]</scope>
    <source>
        <strain>ATCC 15703 / DSM 20083 / NCTC 11814 / E194a</strain>
    </source>
</reference>
<reference key="3">
    <citation type="journal article" date="2000" name="Appl. Environ. Microbiol.">
        <title>Characterization of a novel beta-galactosidase from Bifidobacterium adolescentis DSM 20083 active towards transgalactooligosaccharides.</title>
        <authorList>
            <person name="Van Laere K.M."/>
            <person name="Abee T."/>
            <person name="Schols H.A."/>
            <person name="Beldman G."/>
            <person name="Voragen A.G."/>
        </authorList>
    </citation>
    <scope>FUNCTION</scope>
    <scope>CATALYTIC ACTIVITY</scope>
    <scope>BIOPHYSICOCHEMICAL PROPERTIES</scope>
    <scope>ACTIVITY REGULATION</scope>
    <source>
        <strain>ATCC 15703 / DSM 20083 / NCTC 11814 / E194a</strain>
    </source>
</reference>
<dbReference type="EC" id="3.2.1.23"/>
<dbReference type="EMBL" id="AY359872">
    <property type="protein sequence ID" value="AAR24113.1"/>
    <property type="molecule type" value="Genomic_DNA"/>
</dbReference>
<dbReference type="EMBL" id="AP009256">
    <property type="protein sequence ID" value="BAF40182.1"/>
    <property type="status" value="ALT_INIT"/>
    <property type="molecule type" value="Genomic_DNA"/>
</dbReference>
<dbReference type="RefSeq" id="WP_041777416.1">
    <property type="nucleotide sequence ID" value="NC_008618.1"/>
</dbReference>
<dbReference type="PDB" id="5VYM">
    <property type="method" value="X-ray"/>
    <property type="resolution" value="2.46 A"/>
    <property type="chains" value="A/B=409-638"/>
</dbReference>
<dbReference type="PDBsum" id="5VYM"/>
<dbReference type="SMR" id="A1A399"/>
<dbReference type="STRING" id="367928.BAD_1401"/>
<dbReference type="CAZy" id="GH42">
    <property type="family name" value="Glycoside Hydrolase Family 42"/>
</dbReference>
<dbReference type="PaxDb" id="1680-BADO_1629"/>
<dbReference type="DNASU" id="4557550"/>
<dbReference type="GeneID" id="4557550"/>
<dbReference type="KEGG" id="bad:BAD_1401"/>
<dbReference type="HOGENOM" id="CLU_012430_1_1_11"/>
<dbReference type="Proteomes" id="UP000008702">
    <property type="component" value="Chromosome"/>
</dbReference>
<dbReference type="GO" id="GO:0009341">
    <property type="term" value="C:beta-galactosidase complex"/>
    <property type="evidence" value="ECO:0007669"/>
    <property type="project" value="InterPro"/>
</dbReference>
<dbReference type="GO" id="GO:0004565">
    <property type="term" value="F:beta-galactosidase activity"/>
    <property type="evidence" value="ECO:0007669"/>
    <property type="project" value="UniProtKB-EC"/>
</dbReference>
<dbReference type="GO" id="GO:0005975">
    <property type="term" value="P:carbohydrate metabolic process"/>
    <property type="evidence" value="ECO:0007669"/>
    <property type="project" value="InterPro"/>
</dbReference>
<dbReference type="CDD" id="cd03143">
    <property type="entry name" value="A4_beta-galactosidase_middle_domain"/>
    <property type="match status" value="1"/>
</dbReference>
<dbReference type="Gene3D" id="3.40.50.880">
    <property type="match status" value="1"/>
</dbReference>
<dbReference type="Gene3D" id="3.20.20.80">
    <property type="entry name" value="Glycosidases"/>
    <property type="match status" value="1"/>
</dbReference>
<dbReference type="InterPro" id="IPR013738">
    <property type="entry name" value="Beta_galactosidase_Trimer"/>
</dbReference>
<dbReference type="InterPro" id="IPR029062">
    <property type="entry name" value="Class_I_gatase-like"/>
</dbReference>
<dbReference type="InterPro" id="IPR003476">
    <property type="entry name" value="Glyco_hydro_42"/>
</dbReference>
<dbReference type="InterPro" id="IPR013529">
    <property type="entry name" value="Glyco_hydro_42_N"/>
</dbReference>
<dbReference type="InterPro" id="IPR017853">
    <property type="entry name" value="Glycoside_hydrolase_SF"/>
</dbReference>
<dbReference type="PANTHER" id="PTHR36447">
    <property type="entry name" value="BETA-GALACTOSIDASE GANA"/>
    <property type="match status" value="1"/>
</dbReference>
<dbReference type="PANTHER" id="PTHR36447:SF1">
    <property type="entry name" value="BETA-GALACTOSIDASE GANA"/>
    <property type="match status" value="1"/>
</dbReference>
<dbReference type="Pfam" id="PF02449">
    <property type="entry name" value="Glyco_hydro_42"/>
    <property type="match status" value="1"/>
</dbReference>
<dbReference type="Pfam" id="PF08532">
    <property type="entry name" value="Glyco_hydro_42M"/>
    <property type="match status" value="1"/>
</dbReference>
<dbReference type="PIRSF" id="PIRSF001084">
    <property type="entry name" value="B-galactosidase"/>
    <property type="match status" value="1"/>
</dbReference>
<dbReference type="SUPFAM" id="SSF51445">
    <property type="entry name" value="(Trans)glycosidases"/>
    <property type="match status" value="1"/>
</dbReference>
<dbReference type="SUPFAM" id="SSF52317">
    <property type="entry name" value="Class I glutamine amidotransferase-like"/>
    <property type="match status" value="1"/>
</dbReference>